<reference key="1">
    <citation type="journal article" date="1998" name="J. Bacteriol.">
        <title>Novel rkp gene clusters of Sinorhizobium meliloti involved in capsular polysaccharide production and invasion of the symbiotic nodule: the rkpK gene encodes a UDP-glucose dehydrogenase.</title>
        <authorList>
            <person name="Kereszt A."/>
            <person name="Kiss E."/>
            <person name="Reuhs B.L."/>
            <person name="Carlson R.W."/>
            <person name="Kondorosi A."/>
            <person name="Putnoky P."/>
        </authorList>
    </citation>
    <scope>NUCLEOTIDE SEQUENCE [GENOMIC DNA]</scope>
    <scope>CATALYTIC ACTIVITY</scope>
    <scope>PATHWAY</scope>
    <source>
        <strain>41</strain>
    </source>
</reference>
<reference key="2">
    <citation type="journal article" date="2001" name="Proc. Natl. Acad. Sci. U.S.A.">
        <title>Analysis of the chromosome sequence of the legume symbiont Sinorhizobium meliloti strain 1021.</title>
        <authorList>
            <person name="Capela D."/>
            <person name="Barloy-Hubler F."/>
            <person name="Gouzy J."/>
            <person name="Bothe G."/>
            <person name="Ampe F."/>
            <person name="Batut J."/>
            <person name="Boistard P."/>
            <person name="Becker A."/>
            <person name="Boutry M."/>
            <person name="Cadieu E."/>
            <person name="Dreano S."/>
            <person name="Gloux S."/>
            <person name="Godrie T."/>
            <person name="Goffeau A."/>
            <person name="Kahn D."/>
            <person name="Kiss E."/>
            <person name="Lelaure V."/>
            <person name="Masuy D."/>
            <person name="Pohl T."/>
            <person name="Portetelle D."/>
            <person name="Puehler A."/>
            <person name="Purnelle B."/>
            <person name="Ramsperger U."/>
            <person name="Renard C."/>
            <person name="Thebault P."/>
            <person name="Vandenbol M."/>
            <person name="Weidner S."/>
            <person name="Galibert F."/>
        </authorList>
    </citation>
    <scope>NUCLEOTIDE SEQUENCE [LARGE SCALE GENOMIC DNA]</scope>
    <source>
        <strain>1021</strain>
    </source>
</reference>
<reference key="3">
    <citation type="journal article" date="2001" name="Science">
        <title>The composite genome of the legume symbiont Sinorhizobium meliloti.</title>
        <authorList>
            <person name="Galibert F."/>
            <person name="Finan T.M."/>
            <person name="Long S.R."/>
            <person name="Puehler A."/>
            <person name="Abola P."/>
            <person name="Ampe F."/>
            <person name="Barloy-Hubler F."/>
            <person name="Barnett M.J."/>
            <person name="Becker A."/>
            <person name="Boistard P."/>
            <person name="Bothe G."/>
            <person name="Boutry M."/>
            <person name="Bowser L."/>
            <person name="Buhrmester J."/>
            <person name="Cadieu E."/>
            <person name="Capela D."/>
            <person name="Chain P."/>
            <person name="Cowie A."/>
            <person name="Davis R.W."/>
            <person name="Dreano S."/>
            <person name="Federspiel N.A."/>
            <person name="Fisher R.F."/>
            <person name="Gloux S."/>
            <person name="Godrie T."/>
            <person name="Goffeau A."/>
            <person name="Golding B."/>
            <person name="Gouzy J."/>
            <person name="Gurjal M."/>
            <person name="Hernandez-Lucas I."/>
            <person name="Hong A."/>
            <person name="Huizar L."/>
            <person name="Hyman R.W."/>
            <person name="Jones T."/>
            <person name="Kahn D."/>
            <person name="Kahn M.L."/>
            <person name="Kalman S."/>
            <person name="Keating D.H."/>
            <person name="Kiss E."/>
            <person name="Komp C."/>
            <person name="Lelaure V."/>
            <person name="Masuy D."/>
            <person name="Palm C."/>
            <person name="Peck M.C."/>
            <person name="Pohl T.M."/>
            <person name="Portetelle D."/>
            <person name="Purnelle B."/>
            <person name="Ramsperger U."/>
            <person name="Surzycki R."/>
            <person name="Thebault P."/>
            <person name="Vandenbol M."/>
            <person name="Vorhoelter F.J."/>
            <person name="Weidner S."/>
            <person name="Wells D.H."/>
            <person name="Wong K."/>
            <person name="Yeh K.-C."/>
            <person name="Batut J."/>
        </authorList>
    </citation>
    <scope>NUCLEOTIDE SEQUENCE [LARGE SCALE GENOMIC DNA]</scope>
    <source>
        <strain>1021</strain>
    </source>
</reference>
<comment type="catalytic activity">
    <reaction evidence="2">
        <text>UDP-alpha-D-glucose + 2 NAD(+) + H2O = UDP-alpha-D-glucuronate + 2 NADH + 3 H(+)</text>
        <dbReference type="Rhea" id="RHEA:23596"/>
        <dbReference type="ChEBI" id="CHEBI:15377"/>
        <dbReference type="ChEBI" id="CHEBI:15378"/>
        <dbReference type="ChEBI" id="CHEBI:57540"/>
        <dbReference type="ChEBI" id="CHEBI:57945"/>
        <dbReference type="ChEBI" id="CHEBI:58052"/>
        <dbReference type="ChEBI" id="CHEBI:58885"/>
        <dbReference type="EC" id="1.1.1.22"/>
    </reaction>
</comment>
<comment type="pathway">
    <text evidence="4">Nucleotide-sugar biosynthesis; UDP-alpha-D-glucuronate biosynthesis; UDP-alpha-D-glucuronate from UDP-alpha-D-glucose: step 1/1.</text>
</comment>
<comment type="pathway">
    <text evidence="2">Capsule biogenesis; capsule polysaccharide biosynthesis.</text>
</comment>
<comment type="similarity">
    <text evidence="4">Belongs to the UDP-glucose/GDP-mannose dehydrogenase family.</text>
</comment>
<gene>
    <name evidence="3" type="primary">rkpK</name>
    <name type="ordered locus">R01082</name>
    <name type="ORF">SMc02641</name>
</gene>
<feature type="chain" id="PRO_0000074050" description="UDP-glucose 6-dehydrogenase">
    <location>
        <begin position="1"/>
        <end position="437"/>
    </location>
</feature>
<feature type="active site" description="Nucleophile" evidence="1">
    <location>
        <position position="265"/>
    </location>
</feature>
<feature type="binding site" evidence="1">
    <location>
        <position position="11"/>
    </location>
    <ligand>
        <name>NAD(+)</name>
        <dbReference type="ChEBI" id="CHEBI:57540"/>
    </ligand>
</feature>
<feature type="binding site" evidence="1">
    <location>
        <position position="30"/>
    </location>
    <ligand>
        <name>NAD(+)</name>
        <dbReference type="ChEBI" id="CHEBI:57540"/>
    </ligand>
</feature>
<feature type="binding site" evidence="1">
    <location>
        <position position="35"/>
    </location>
    <ligand>
        <name>NAD(+)</name>
        <dbReference type="ChEBI" id="CHEBI:57540"/>
    </ligand>
</feature>
<feature type="binding site" evidence="1">
    <location>
        <position position="86"/>
    </location>
    <ligand>
        <name>NAD(+)</name>
        <dbReference type="ChEBI" id="CHEBI:57540"/>
    </ligand>
</feature>
<feature type="binding site" evidence="1">
    <location>
        <position position="122"/>
    </location>
    <ligand>
        <name>NAD(+)</name>
        <dbReference type="ChEBI" id="CHEBI:57540"/>
    </ligand>
</feature>
<feature type="binding site" evidence="1">
    <location>
        <begin position="151"/>
        <end position="155"/>
    </location>
    <ligand>
        <name>substrate</name>
    </ligand>
</feature>
<feature type="binding site" evidence="1">
    <location>
        <position position="155"/>
    </location>
    <ligand>
        <name>NAD(+)</name>
        <dbReference type="ChEBI" id="CHEBI:57540"/>
    </ligand>
</feature>
<feature type="binding site" evidence="1">
    <location>
        <position position="209"/>
    </location>
    <ligand>
        <name>substrate</name>
    </ligand>
</feature>
<feature type="binding site" evidence="1">
    <location>
        <position position="213"/>
    </location>
    <ligand>
        <name>substrate</name>
    </ligand>
</feature>
<feature type="binding site" evidence="1">
    <location>
        <begin position="254"/>
        <end position="258"/>
    </location>
    <ligand>
        <name>substrate</name>
    </ligand>
</feature>
<feature type="binding site" evidence="1">
    <location>
        <position position="262"/>
    </location>
    <ligand>
        <name>substrate</name>
    </ligand>
</feature>
<feature type="binding site" evidence="1">
    <location>
        <position position="268"/>
    </location>
    <ligand>
        <name>NAD(+)</name>
        <dbReference type="ChEBI" id="CHEBI:57540"/>
    </ligand>
</feature>
<feature type="binding site" evidence="1">
    <location>
        <position position="326"/>
    </location>
    <ligand>
        <name>substrate</name>
    </ligand>
</feature>
<feature type="binding site" evidence="1">
    <location>
        <position position="333"/>
    </location>
    <ligand>
        <name>NAD(+)</name>
        <dbReference type="ChEBI" id="CHEBI:57540"/>
    </ligand>
</feature>
<feature type="sequence conflict" description="In Ref. 1; CAA10918." evidence="4" ref="1">
    <original>A</original>
    <variation>S</variation>
    <location>
        <position position="109"/>
    </location>
</feature>
<feature type="sequence conflict" description="In Ref. 1; CAA10918." evidence="4" ref="1">
    <original>A</original>
    <variation>V</variation>
    <location>
        <position position="142"/>
    </location>
</feature>
<feature type="sequence conflict" description="In Ref. 1; CAA10918." evidence="4" ref="1">
    <original>I</original>
    <variation>Y</variation>
    <location>
        <position position="318"/>
    </location>
</feature>
<feature type="sequence conflict" description="In Ref. 1; CAA10918." evidence="4" ref="1">
    <original>S</original>
    <variation>T</variation>
    <location>
        <position position="335"/>
    </location>
</feature>
<name>UDG_RHIME</name>
<proteinExistence type="evidence at protein level"/>
<protein>
    <recommendedName>
        <fullName evidence="4">UDP-glucose 6-dehydrogenase</fullName>
        <shortName evidence="4">UDP-Glc dehydrogenase</shortName>
        <shortName evidence="4">UDP-GlcDH</shortName>
        <shortName evidence="4">UDPGDH</shortName>
        <ecNumber evidence="2">1.1.1.22</ecNumber>
    </recommendedName>
</protein>
<dbReference type="EC" id="1.1.1.22" evidence="2"/>
<dbReference type="EMBL" id="AJ222661">
    <property type="protein sequence ID" value="CAA10918.1"/>
    <property type="molecule type" value="Genomic_DNA"/>
</dbReference>
<dbReference type="EMBL" id="AL591688">
    <property type="protein sequence ID" value="CAC45661.1"/>
    <property type="molecule type" value="Genomic_DNA"/>
</dbReference>
<dbReference type="PIR" id="T46573">
    <property type="entry name" value="T46573"/>
</dbReference>
<dbReference type="RefSeq" id="NP_385188.1">
    <property type="nucleotide sequence ID" value="NC_003047.1"/>
</dbReference>
<dbReference type="RefSeq" id="WP_010969031.1">
    <property type="nucleotide sequence ID" value="NC_003047.1"/>
</dbReference>
<dbReference type="SMR" id="O54068"/>
<dbReference type="EnsemblBacteria" id="CAC45661">
    <property type="protein sequence ID" value="CAC45661"/>
    <property type="gene ID" value="SMc02641"/>
</dbReference>
<dbReference type="KEGG" id="sme:SMc02641"/>
<dbReference type="PATRIC" id="fig|266834.11.peg.2490"/>
<dbReference type="eggNOG" id="COG1004">
    <property type="taxonomic scope" value="Bacteria"/>
</dbReference>
<dbReference type="HOGENOM" id="CLU_023810_1_2_5"/>
<dbReference type="OrthoDB" id="9803238at2"/>
<dbReference type="UniPathway" id="UPA00038">
    <property type="reaction ID" value="UER00491"/>
</dbReference>
<dbReference type="UniPathway" id="UPA00934"/>
<dbReference type="Proteomes" id="UP000001976">
    <property type="component" value="Chromosome"/>
</dbReference>
<dbReference type="GO" id="GO:0051287">
    <property type="term" value="F:NAD binding"/>
    <property type="evidence" value="ECO:0007669"/>
    <property type="project" value="InterPro"/>
</dbReference>
<dbReference type="GO" id="GO:0003979">
    <property type="term" value="F:UDP-glucose 6-dehydrogenase activity"/>
    <property type="evidence" value="ECO:0007669"/>
    <property type="project" value="UniProtKB-EC"/>
</dbReference>
<dbReference type="GO" id="GO:0045227">
    <property type="term" value="P:capsule polysaccharide biosynthetic process"/>
    <property type="evidence" value="ECO:0007669"/>
    <property type="project" value="UniProtKB-UniPathway"/>
</dbReference>
<dbReference type="GO" id="GO:0006065">
    <property type="term" value="P:UDP-glucuronate biosynthetic process"/>
    <property type="evidence" value="ECO:0007669"/>
    <property type="project" value="UniProtKB-UniPathway"/>
</dbReference>
<dbReference type="Gene3D" id="1.20.5.100">
    <property type="entry name" value="Cytochrome c1, transmembrane anchor, C-terminal"/>
    <property type="match status" value="1"/>
</dbReference>
<dbReference type="Gene3D" id="3.40.50.720">
    <property type="entry name" value="NAD(P)-binding Rossmann-like Domain"/>
    <property type="match status" value="2"/>
</dbReference>
<dbReference type="InterPro" id="IPR008927">
    <property type="entry name" value="6-PGluconate_DH-like_C_sf"/>
</dbReference>
<dbReference type="InterPro" id="IPR036291">
    <property type="entry name" value="NAD(P)-bd_dom_sf"/>
</dbReference>
<dbReference type="InterPro" id="IPR017476">
    <property type="entry name" value="UDP-Glc/GDP-Man"/>
</dbReference>
<dbReference type="InterPro" id="IPR014027">
    <property type="entry name" value="UDP-Glc/GDP-Man_DH_C"/>
</dbReference>
<dbReference type="InterPro" id="IPR036220">
    <property type="entry name" value="UDP-Glc/GDP-Man_DH_C_sf"/>
</dbReference>
<dbReference type="InterPro" id="IPR014026">
    <property type="entry name" value="UDP-Glc/GDP-Man_DH_dimer"/>
</dbReference>
<dbReference type="InterPro" id="IPR001732">
    <property type="entry name" value="UDP-Glc/GDP-Man_DH_N"/>
</dbReference>
<dbReference type="InterPro" id="IPR028357">
    <property type="entry name" value="UDPglc_DH_bac"/>
</dbReference>
<dbReference type="NCBIfam" id="TIGR03026">
    <property type="entry name" value="NDP-sugDHase"/>
    <property type="match status" value="1"/>
</dbReference>
<dbReference type="PANTHER" id="PTHR43750">
    <property type="entry name" value="UDP-GLUCOSE 6-DEHYDROGENASE TUAD"/>
    <property type="match status" value="1"/>
</dbReference>
<dbReference type="PANTHER" id="PTHR43750:SF3">
    <property type="entry name" value="UDP-GLUCOSE 6-DEHYDROGENASE TUAD"/>
    <property type="match status" value="1"/>
</dbReference>
<dbReference type="Pfam" id="PF00984">
    <property type="entry name" value="UDPG_MGDP_dh"/>
    <property type="match status" value="1"/>
</dbReference>
<dbReference type="Pfam" id="PF03720">
    <property type="entry name" value="UDPG_MGDP_dh_C"/>
    <property type="match status" value="1"/>
</dbReference>
<dbReference type="Pfam" id="PF03721">
    <property type="entry name" value="UDPG_MGDP_dh_N"/>
    <property type="match status" value="1"/>
</dbReference>
<dbReference type="PIRSF" id="PIRSF500134">
    <property type="entry name" value="UDPglc_DH_bac"/>
    <property type="match status" value="1"/>
</dbReference>
<dbReference type="PIRSF" id="PIRSF000124">
    <property type="entry name" value="UDPglc_GDPman_dh"/>
    <property type="match status" value="1"/>
</dbReference>
<dbReference type="SMART" id="SM00984">
    <property type="entry name" value="UDPG_MGDP_dh_C"/>
    <property type="match status" value="1"/>
</dbReference>
<dbReference type="SUPFAM" id="SSF48179">
    <property type="entry name" value="6-phosphogluconate dehydrogenase C-terminal domain-like"/>
    <property type="match status" value="1"/>
</dbReference>
<dbReference type="SUPFAM" id="SSF51735">
    <property type="entry name" value="NAD(P)-binding Rossmann-fold domains"/>
    <property type="match status" value="1"/>
</dbReference>
<dbReference type="SUPFAM" id="SSF52413">
    <property type="entry name" value="UDP-glucose/GDP-mannose dehydrogenase C-terminal domain"/>
    <property type="match status" value="1"/>
</dbReference>
<accession>O54068</accession>
<organism>
    <name type="scientific">Rhizobium meliloti (strain 1021)</name>
    <name type="common">Ensifer meliloti</name>
    <name type="synonym">Sinorhizobium meliloti</name>
    <dbReference type="NCBI Taxonomy" id="266834"/>
    <lineage>
        <taxon>Bacteria</taxon>
        <taxon>Pseudomonadati</taxon>
        <taxon>Pseudomonadota</taxon>
        <taxon>Alphaproteobacteria</taxon>
        <taxon>Hyphomicrobiales</taxon>
        <taxon>Rhizobiaceae</taxon>
        <taxon>Sinorhizobium/Ensifer group</taxon>
        <taxon>Sinorhizobium</taxon>
    </lineage>
</organism>
<keyword id="KW-0972">Capsule biogenesis/degradation</keyword>
<keyword id="KW-0520">NAD</keyword>
<keyword id="KW-0560">Oxidoreductase</keyword>
<keyword id="KW-1185">Reference proteome</keyword>
<sequence>MKITMIGAGYVGLVSGVCFADFGHDVVCVDKDEGKISALKKGQIPIFEPGLDHLVASNVASGRLNFTDDLKTAVAASDVVFIAVGTPSRRGDGHADLSYVYAAAREIAANLQGFTVVVTKSTVPVGTGDEVERIIRETNPAADVTVVSNPEFLREGAAIEDFKRPDRIVIGVDGSDGRAREVMTEVYRPLYLNQSPLVFTTRRTSELIKYAGNAFLAMKITFINEIADLCEKVGANVQDVARGIGLDGRIGSKFLHAGPGYGGSCFPKDTLALVKTAQDHDTPVRLVETTVAVNDNRKRAMGRKVIAAAGGDIRGSKIAVLGLTFKPNTDDMRDSPAIAVVQALQDAGARVTGYDPEGMENARKLIEGLDCARDPYEAAAEADALVIITEWNEFRALDFDRLKSTMKTPLLVDLRNIYRKDEVAKHGFRYASIGRPD</sequence>
<evidence type="ECO:0000250" key="1">
    <source>
        <dbReference type="UniProtKB" id="Q0P8H3"/>
    </source>
</evidence>
<evidence type="ECO:0000269" key="2">
    <source>
    </source>
</evidence>
<evidence type="ECO:0000303" key="3">
    <source>
    </source>
</evidence>
<evidence type="ECO:0000305" key="4"/>